<organism>
    <name type="scientific">Salmonella heidelberg (strain SL476)</name>
    <dbReference type="NCBI Taxonomy" id="454169"/>
    <lineage>
        <taxon>Bacteria</taxon>
        <taxon>Pseudomonadati</taxon>
        <taxon>Pseudomonadota</taxon>
        <taxon>Gammaproteobacteria</taxon>
        <taxon>Enterobacterales</taxon>
        <taxon>Enterobacteriaceae</taxon>
        <taxon>Salmonella</taxon>
    </lineage>
</organism>
<name>LPXH_SALHS</name>
<gene>
    <name evidence="1" type="primary">lpxH</name>
    <name type="ordered locus">SeHA_C0643</name>
</gene>
<protein>
    <recommendedName>
        <fullName evidence="1">UDP-2,3-diacylglucosamine hydrolase</fullName>
        <ecNumber evidence="1">3.6.1.54</ecNumber>
    </recommendedName>
    <alternativeName>
        <fullName evidence="1">UDP-2,3-diacylglucosamine diphosphatase</fullName>
    </alternativeName>
</protein>
<proteinExistence type="inferred from homology"/>
<keyword id="KW-0997">Cell inner membrane</keyword>
<keyword id="KW-1003">Cell membrane</keyword>
<keyword id="KW-0378">Hydrolase</keyword>
<keyword id="KW-0441">Lipid A biosynthesis</keyword>
<keyword id="KW-0444">Lipid biosynthesis</keyword>
<keyword id="KW-0443">Lipid metabolism</keyword>
<keyword id="KW-0464">Manganese</keyword>
<keyword id="KW-0472">Membrane</keyword>
<keyword id="KW-0479">Metal-binding</keyword>
<sequence>MATLFIADLHLQTEEPAIVAGFLRFLAVEARQADALYILGDLFEAWIGDDDPNPLHREMAVAIKSLVDSGVPCFFIHGNRDFLIGKRFARESGMILLPQEKVLDLYGRNVLIMHGDTLCTDDAGYQAFRAKVHNPWVQRLFLTLPLFIRRRIAARMRAGSKAANSSKSLDIMDVNAQTVVAEMEKHRVQWLIHGHTHRPAVHELSANDQPAFRVVLGAWHHEGSMVKVTPDNVELIAFPL</sequence>
<accession>B4T9M8</accession>
<evidence type="ECO:0000255" key="1">
    <source>
        <dbReference type="HAMAP-Rule" id="MF_00575"/>
    </source>
</evidence>
<dbReference type="EC" id="3.6.1.54" evidence="1"/>
<dbReference type="EMBL" id="CP001120">
    <property type="protein sequence ID" value="ACF67673.1"/>
    <property type="molecule type" value="Genomic_DNA"/>
</dbReference>
<dbReference type="RefSeq" id="WP_000212284.1">
    <property type="nucleotide sequence ID" value="NC_011083.1"/>
</dbReference>
<dbReference type="SMR" id="B4T9M8"/>
<dbReference type="KEGG" id="seh:SeHA_C0643"/>
<dbReference type="HOGENOM" id="CLU_074586_0_0_6"/>
<dbReference type="UniPathway" id="UPA00359">
    <property type="reaction ID" value="UER00480"/>
</dbReference>
<dbReference type="Proteomes" id="UP000001866">
    <property type="component" value="Chromosome"/>
</dbReference>
<dbReference type="GO" id="GO:0005737">
    <property type="term" value="C:cytoplasm"/>
    <property type="evidence" value="ECO:0007669"/>
    <property type="project" value="InterPro"/>
</dbReference>
<dbReference type="GO" id="GO:0019897">
    <property type="term" value="C:extrinsic component of plasma membrane"/>
    <property type="evidence" value="ECO:0007669"/>
    <property type="project" value="UniProtKB-UniRule"/>
</dbReference>
<dbReference type="GO" id="GO:0030145">
    <property type="term" value="F:manganese ion binding"/>
    <property type="evidence" value="ECO:0007669"/>
    <property type="project" value="UniProtKB-UniRule"/>
</dbReference>
<dbReference type="GO" id="GO:0008758">
    <property type="term" value="F:UDP-2,3-diacylglucosamine hydrolase activity"/>
    <property type="evidence" value="ECO:0007669"/>
    <property type="project" value="UniProtKB-UniRule"/>
</dbReference>
<dbReference type="GO" id="GO:0009245">
    <property type="term" value="P:lipid A biosynthetic process"/>
    <property type="evidence" value="ECO:0007669"/>
    <property type="project" value="UniProtKB-UniRule"/>
</dbReference>
<dbReference type="CDD" id="cd07398">
    <property type="entry name" value="MPP_YbbF-LpxH"/>
    <property type="match status" value="1"/>
</dbReference>
<dbReference type="FunFam" id="3.60.21.10:FF:000012">
    <property type="entry name" value="UDP-2,3-diacylglucosamine hydrolase"/>
    <property type="match status" value="1"/>
</dbReference>
<dbReference type="Gene3D" id="3.60.21.10">
    <property type="match status" value="1"/>
</dbReference>
<dbReference type="HAMAP" id="MF_00575">
    <property type="entry name" value="LpxH"/>
    <property type="match status" value="1"/>
</dbReference>
<dbReference type="InterPro" id="IPR004843">
    <property type="entry name" value="Calcineurin-like_PHP_ApaH"/>
</dbReference>
<dbReference type="InterPro" id="IPR043461">
    <property type="entry name" value="LpxH-like"/>
</dbReference>
<dbReference type="InterPro" id="IPR029052">
    <property type="entry name" value="Metallo-depent_PP-like"/>
</dbReference>
<dbReference type="InterPro" id="IPR010138">
    <property type="entry name" value="UDP-diacylglucosamine_Hdrlase"/>
</dbReference>
<dbReference type="NCBIfam" id="TIGR01854">
    <property type="entry name" value="lipid_A_lpxH"/>
    <property type="match status" value="1"/>
</dbReference>
<dbReference type="NCBIfam" id="NF003743">
    <property type="entry name" value="PRK05340.1"/>
    <property type="match status" value="1"/>
</dbReference>
<dbReference type="PANTHER" id="PTHR34990:SF1">
    <property type="entry name" value="UDP-2,3-DIACYLGLUCOSAMINE HYDROLASE"/>
    <property type="match status" value="1"/>
</dbReference>
<dbReference type="PANTHER" id="PTHR34990">
    <property type="entry name" value="UDP-2,3-DIACYLGLUCOSAMINE HYDROLASE-RELATED"/>
    <property type="match status" value="1"/>
</dbReference>
<dbReference type="Pfam" id="PF00149">
    <property type="entry name" value="Metallophos"/>
    <property type="match status" value="1"/>
</dbReference>
<dbReference type="SUPFAM" id="SSF56300">
    <property type="entry name" value="Metallo-dependent phosphatases"/>
    <property type="match status" value="1"/>
</dbReference>
<comment type="function">
    <text evidence="1">Hydrolyzes the pyrophosphate bond of UDP-2,3-diacylglucosamine to yield 2,3-diacylglucosamine 1-phosphate (lipid X) and UMP by catalyzing the attack of water at the alpha-P atom. Involved in the biosynthesis of lipid A, a phosphorylated glycolipid that anchors the lipopolysaccharide to the outer membrane of the cell.</text>
</comment>
<comment type="catalytic activity">
    <reaction evidence="1">
        <text>UDP-2-N,3-O-bis[(3R)-3-hydroxytetradecanoyl]-alpha-D-glucosamine + H2O = 2-N,3-O-bis[(3R)-3-hydroxytetradecanoyl]-alpha-D-glucosaminyl 1-phosphate + UMP + 2 H(+)</text>
        <dbReference type="Rhea" id="RHEA:25213"/>
        <dbReference type="ChEBI" id="CHEBI:15377"/>
        <dbReference type="ChEBI" id="CHEBI:15378"/>
        <dbReference type="ChEBI" id="CHEBI:57865"/>
        <dbReference type="ChEBI" id="CHEBI:57957"/>
        <dbReference type="ChEBI" id="CHEBI:78847"/>
        <dbReference type="EC" id="3.6.1.54"/>
    </reaction>
</comment>
<comment type="cofactor">
    <cofactor evidence="1">
        <name>Mn(2+)</name>
        <dbReference type="ChEBI" id="CHEBI:29035"/>
    </cofactor>
    <text evidence="1">Binds 2 Mn(2+) ions per subunit in a binuclear metal center.</text>
</comment>
<comment type="pathway">
    <text evidence="1">Glycolipid biosynthesis; lipid IV(A) biosynthesis; lipid IV(A) from (3R)-3-hydroxytetradecanoyl-[acyl-carrier-protein] and UDP-N-acetyl-alpha-D-glucosamine: step 4/6.</text>
</comment>
<comment type="subcellular location">
    <subcellularLocation>
        <location evidence="1">Cell inner membrane</location>
        <topology evidence="1">Peripheral membrane protein</topology>
        <orientation evidence="1">Cytoplasmic side</orientation>
    </subcellularLocation>
</comment>
<comment type="similarity">
    <text evidence="1">Belongs to the LpxH family.</text>
</comment>
<feature type="chain" id="PRO_1000129534" description="UDP-2,3-diacylglucosamine hydrolase">
    <location>
        <begin position="1"/>
        <end position="240"/>
    </location>
</feature>
<feature type="binding site" evidence="1">
    <location>
        <position position="8"/>
    </location>
    <ligand>
        <name>Mn(2+)</name>
        <dbReference type="ChEBI" id="CHEBI:29035"/>
        <label>1</label>
    </ligand>
</feature>
<feature type="binding site" evidence="1">
    <location>
        <position position="10"/>
    </location>
    <ligand>
        <name>Mn(2+)</name>
        <dbReference type="ChEBI" id="CHEBI:29035"/>
        <label>1</label>
    </ligand>
</feature>
<feature type="binding site" evidence="1">
    <location>
        <position position="41"/>
    </location>
    <ligand>
        <name>Mn(2+)</name>
        <dbReference type="ChEBI" id="CHEBI:29035"/>
        <label>1</label>
    </ligand>
</feature>
<feature type="binding site" evidence="1">
    <location>
        <position position="41"/>
    </location>
    <ligand>
        <name>Mn(2+)</name>
        <dbReference type="ChEBI" id="CHEBI:29035"/>
        <label>2</label>
    </ligand>
</feature>
<feature type="binding site" evidence="1">
    <location>
        <begin position="79"/>
        <end position="80"/>
    </location>
    <ligand>
        <name>substrate</name>
    </ligand>
</feature>
<feature type="binding site" evidence="1">
    <location>
        <position position="79"/>
    </location>
    <ligand>
        <name>Mn(2+)</name>
        <dbReference type="ChEBI" id="CHEBI:29035"/>
        <label>2</label>
    </ligand>
</feature>
<feature type="binding site" evidence="1">
    <location>
        <position position="114"/>
    </location>
    <ligand>
        <name>Mn(2+)</name>
        <dbReference type="ChEBI" id="CHEBI:29035"/>
        <label>2</label>
    </ligand>
</feature>
<feature type="binding site" evidence="1">
    <location>
        <position position="122"/>
    </location>
    <ligand>
        <name>substrate</name>
    </ligand>
</feature>
<feature type="binding site" evidence="1">
    <location>
        <position position="160"/>
    </location>
    <ligand>
        <name>substrate</name>
    </ligand>
</feature>
<feature type="binding site" evidence="1">
    <location>
        <position position="164"/>
    </location>
    <ligand>
        <name>substrate</name>
    </ligand>
</feature>
<feature type="binding site" evidence="1">
    <location>
        <position position="167"/>
    </location>
    <ligand>
        <name>substrate</name>
    </ligand>
</feature>
<feature type="binding site" evidence="1">
    <location>
        <position position="195"/>
    </location>
    <ligand>
        <name>Mn(2+)</name>
        <dbReference type="ChEBI" id="CHEBI:29035"/>
        <label>2</label>
    </ligand>
</feature>
<feature type="binding site" evidence="1">
    <location>
        <position position="195"/>
    </location>
    <ligand>
        <name>substrate</name>
    </ligand>
</feature>
<feature type="binding site" evidence="1">
    <location>
        <position position="197"/>
    </location>
    <ligand>
        <name>Mn(2+)</name>
        <dbReference type="ChEBI" id="CHEBI:29035"/>
        <label>1</label>
    </ligand>
</feature>
<reference key="1">
    <citation type="journal article" date="2011" name="J. Bacteriol.">
        <title>Comparative genomics of 28 Salmonella enterica isolates: evidence for CRISPR-mediated adaptive sublineage evolution.</title>
        <authorList>
            <person name="Fricke W.F."/>
            <person name="Mammel M.K."/>
            <person name="McDermott P.F."/>
            <person name="Tartera C."/>
            <person name="White D.G."/>
            <person name="Leclerc J.E."/>
            <person name="Ravel J."/>
            <person name="Cebula T.A."/>
        </authorList>
    </citation>
    <scope>NUCLEOTIDE SEQUENCE [LARGE SCALE GENOMIC DNA]</scope>
    <source>
        <strain>SL476</strain>
    </source>
</reference>